<organism>
    <name type="scientific">Arabidopsis thaliana</name>
    <name type="common">Mouse-ear cress</name>
    <dbReference type="NCBI Taxonomy" id="3702"/>
    <lineage>
        <taxon>Eukaryota</taxon>
        <taxon>Viridiplantae</taxon>
        <taxon>Streptophyta</taxon>
        <taxon>Embryophyta</taxon>
        <taxon>Tracheophyta</taxon>
        <taxon>Spermatophyta</taxon>
        <taxon>Magnoliopsida</taxon>
        <taxon>eudicotyledons</taxon>
        <taxon>Gunneridae</taxon>
        <taxon>Pentapetalae</taxon>
        <taxon>rosids</taxon>
        <taxon>malvids</taxon>
        <taxon>Brassicales</taxon>
        <taxon>Brassicaceae</taxon>
        <taxon>Camelineae</taxon>
        <taxon>Arabidopsis</taxon>
    </lineage>
</organism>
<name>RAD51_ARATH</name>
<accession>P94102</accession>
<keyword id="KW-0067">ATP-binding</keyword>
<keyword id="KW-0227">DNA damage</keyword>
<keyword id="KW-0233">DNA recombination</keyword>
<keyword id="KW-0234">DNA repair</keyword>
<keyword id="KW-0238">DNA-binding</keyword>
<keyword id="KW-0547">Nucleotide-binding</keyword>
<keyword id="KW-0539">Nucleus</keyword>
<keyword id="KW-1185">Reference proteome</keyword>
<evidence type="ECO:0000250" key="1">
    <source>
        <dbReference type="UniProtKB" id="Q06609"/>
    </source>
</evidence>
<evidence type="ECO:0000255" key="2">
    <source>
        <dbReference type="PROSITE-ProRule" id="PRU00289"/>
    </source>
</evidence>
<evidence type="ECO:0000256" key="3">
    <source>
        <dbReference type="SAM" id="MobiDB-lite"/>
    </source>
</evidence>
<evidence type="ECO:0000269" key="4">
    <source>
    </source>
</evidence>
<evidence type="ECO:0000269" key="5">
    <source>
    </source>
</evidence>
<evidence type="ECO:0000269" key="6">
    <source>
    </source>
</evidence>
<evidence type="ECO:0000269" key="7">
    <source>
    </source>
</evidence>
<evidence type="ECO:0000269" key="8">
    <source>
    </source>
</evidence>
<evidence type="ECO:0000269" key="9">
    <source>
    </source>
</evidence>
<evidence type="ECO:0000269" key="10">
    <source>
    </source>
</evidence>
<evidence type="ECO:0000303" key="11">
    <source>
    </source>
</evidence>
<evidence type="ECO:0000305" key="12"/>
<evidence type="ECO:0000312" key="13">
    <source>
        <dbReference type="Araport" id="AT5G20850"/>
    </source>
</evidence>
<evidence type="ECO:0000312" key="14">
    <source>
        <dbReference type="EMBL" id="AF296834"/>
    </source>
</evidence>
<proteinExistence type="evidence at protein level"/>
<comment type="function">
    <text evidence="1 7">Binds to single and double-stranded DNA and exhibits DNA-dependent ATPase activity. Unwinds duplex DNA (By similarity). Component of the meiotic recombination pathway. Seems to play a role in mediating chromosome homology search, chromosome pairing and synapsis at early stages and probably chromosome crossing-over at later stages in meiosis. Probably is involved in the repair of meiotic double strand breaks (DBSs) generated by AtSPO11-1 and in homologous recombination. Its function is dispensable for vegetative growth and root mitosis.</text>
</comment>
<comment type="subunit">
    <text evidence="5 8 9">Self-associates and interacts with XRCC3 (PubMed:12139010). Binds to RAD54/CHR25 (PubMed:17227544). Interacts with BRCA2A and BRCA2B (PubMed:16415210). Can form a tripartite complex with both BRCA2B and DSS1(I) (PubMed:16415210).</text>
</comment>
<comment type="interaction">
    <interactant intactId="EBI-307687">
        <id>P94102</id>
    </interactant>
    <interactant intactId="EBI-307680">
        <id>Q7Y1C5</id>
        <label>BRCA2A</label>
    </interactant>
    <organismsDiffer>false</organismsDiffer>
    <experiments>5</experiments>
</comment>
<comment type="interaction">
    <interactant intactId="EBI-307687">
        <id>P94102</id>
    </interactant>
    <interactant intactId="EBI-307707">
        <id>Q7Y1C4</id>
        <label>BRCA2B</label>
    </interactant>
    <organismsDiffer>false</organismsDiffer>
    <experiments>5</experiments>
</comment>
<comment type="interaction">
    <interactant intactId="EBI-307687">
        <id>P94102</id>
    </interactant>
    <interactant intactId="EBI-1768899">
        <id>Q0PCS3</id>
        <label>CHR25</label>
    </interactant>
    <organismsDiffer>false</organismsDiffer>
    <experiments>3</experiments>
</comment>
<comment type="interaction">
    <interactant intactId="EBI-307687">
        <id>P94102</id>
    </interactant>
    <interactant intactId="EBI-307715">
        <id>Q39009</id>
        <label>DMC1</label>
    </interactant>
    <organismsDiffer>false</organismsDiffer>
    <experiments>4</experiments>
</comment>
<comment type="interaction">
    <interactant intactId="EBI-307687">
        <id>P94102</id>
    </interactant>
    <interactant intactId="EBI-1554720">
        <id>Q8GYD2</id>
        <label>MND1</label>
    </interactant>
    <organismsDiffer>false</organismsDiffer>
    <experiments>2</experiments>
</comment>
<comment type="subcellular location">
    <subcellularLocation>
        <location evidence="12">Nucleus</location>
    </subcellularLocation>
</comment>
<comment type="tissue specificity">
    <text evidence="5 7 9 10">Detected in various tissues. Higher expression in reproductive tissues than in vegetative tissues, with the highest expression level in young flower buds. At cellular level, is expressed at low levels in flower primordia, then at higher levels in young anthers and at highest levels in both females and males meiocytes. Not detected in gametophytes.</text>
</comment>
<comment type="developmental stage">
    <text evidence="10">Cell cycle regulated, peaking at the S phase. It is also expressed at high levels in exponentially growing cells in suspension cultures.</text>
</comment>
<comment type="induction">
    <text evidence="4 5 6 10">By genotoxic stress and by DNA damage (gamma-radiation, UV-B). Regulated by ATM in response to DNA double strand breaks (DSBs).</text>
</comment>
<comment type="similarity">
    <text evidence="12">Belongs to the RecA family. RAD51 subfamily.</text>
</comment>
<dbReference type="EMBL" id="U43652">
    <property type="protein sequence ID" value="AAC49555.1"/>
    <property type="molecule type" value="Genomic_DNA"/>
</dbReference>
<dbReference type="EMBL" id="AJ001100">
    <property type="protein sequence ID" value="CAA04529.1"/>
    <property type="molecule type" value="Genomic_DNA"/>
</dbReference>
<dbReference type="EMBL" id="U43528">
    <property type="protein sequence ID" value="AAB37762.1"/>
    <property type="molecule type" value="mRNA"/>
</dbReference>
<dbReference type="EMBL" id="AF296834">
    <property type="status" value="NOT_ANNOTATED_CDS"/>
    <property type="molecule type" value="Genomic_DNA"/>
</dbReference>
<dbReference type="EMBL" id="CP002688">
    <property type="protein sequence ID" value="AED92897.1"/>
    <property type="molecule type" value="Genomic_DNA"/>
</dbReference>
<dbReference type="RefSeq" id="NP_568402.1">
    <property type="nucleotide sequence ID" value="NM_122092.3"/>
</dbReference>
<dbReference type="SMR" id="P94102"/>
<dbReference type="BioGRID" id="17483">
    <property type="interactions" value="9"/>
</dbReference>
<dbReference type="DIP" id="DIP-31780N"/>
<dbReference type="FunCoup" id="P94102">
    <property type="interactions" value="3268"/>
</dbReference>
<dbReference type="IntAct" id="P94102">
    <property type="interactions" value="11"/>
</dbReference>
<dbReference type="STRING" id="3702.P94102"/>
<dbReference type="PaxDb" id="3702-AT5G20850.1"/>
<dbReference type="ProteomicsDB" id="236500"/>
<dbReference type="EnsemblPlants" id="AT5G20850.1">
    <property type="protein sequence ID" value="AT5G20850.1"/>
    <property type="gene ID" value="AT5G20850"/>
</dbReference>
<dbReference type="GeneID" id="832208"/>
<dbReference type="Gramene" id="AT5G20850.1">
    <property type="protein sequence ID" value="AT5G20850.1"/>
    <property type="gene ID" value="AT5G20850"/>
</dbReference>
<dbReference type="KEGG" id="ath:AT5G20850"/>
<dbReference type="Araport" id="AT5G20850"/>
<dbReference type="TAIR" id="AT5G20850">
    <property type="gene designation" value="RAD51"/>
</dbReference>
<dbReference type="eggNOG" id="KOG1433">
    <property type="taxonomic scope" value="Eukaryota"/>
</dbReference>
<dbReference type="HOGENOM" id="CLU_041732_0_0_1"/>
<dbReference type="InParanoid" id="P94102"/>
<dbReference type="OMA" id="RAYNSNH"/>
<dbReference type="OrthoDB" id="10251254at2759"/>
<dbReference type="PhylomeDB" id="P94102"/>
<dbReference type="PRO" id="PR:P94102"/>
<dbReference type="Proteomes" id="UP000006548">
    <property type="component" value="Chromosome 5"/>
</dbReference>
<dbReference type="ExpressionAtlas" id="P94102">
    <property type="expression patterns" value="baseline and differential"/>
</dbReference>
<dbReference type="GO" id="GO:0005694">
    <property type="term" value="C:chromosome"/>
    <property type="evidence" value="ECO:0000314"/>
    <property type="project" value="TAIR"/>
</dbReference>
<dbReference type="GO" id="GO:0005634">
    <property type="term" value="C:nucleus"/>
    <property type="evidence" value="ECO:0000314"/>
    <property type="project" value="TAIR"/>
</dbReference>
<dbReference type="GO" id="GO:0005524">
    <property type="term" value="F:ATP binding"/>
    <property type="evidence" value="ECO:0007669"/>
    <property type="project" value="UniProtKB-KW"/>
</dbReference>
<dbReference type="GO" id="GO:0016887">
    <property type="term" value="F:ATP hydrolysis activity"/>
    <property type="evidence" value="ECO:0007669"/>
    <property type="project" value="InterPro"/>
</dbReference>
<dbReference type="GO" id="GO:0140664">
    <property type="term" value="F:ATP-dependent DNA damage sensor activity"/>
    <property type="evidence" value="ECO:0007669"/>
    <property type="project" value="InterPro"/>
</dbReference>
<dbReference type="GO" id="GO:0000150">
    <property type="term" value="F:DNA strand exchange activity"/>
    <property type="evidence" value="ECO:0007669"/>
    <property type="project" value="InterPro"/>
</dbReference>
<dbReference type="GO" id="GO:0003690">
    <property type="term" value="F:double-stranded DNA binding"/>
    <property type="evidence" value="ECO:0007669"/>
    <property type="project" value="InterPro"/>
</dbReference>
<dbReference type="GO" id="GO:0003697">
    <property type="term" value="F:single-stranded DNA binding"/>
    <property type="evidence" value="ECO:0007669"/>
    <property type="project" value="InterPro"/>
</dbReference>
<dbReference type="GO" id="GO:0006259">
    <property type="term" value="P:DNA metabolic process"/>
    <property type="evidence" value="ECO:0000314"/>
    <property type="project" value="TAIR"/>
</dbReference>
<dbReference type="GO" id="GO:0006302">
    <property type="term" value="P:double-strand break repair"/>
    <property type="evidence" value="ECO:0000315"/>
    <property type="project" value="TAIR"/>
</dbReference>
<dbReference type="GO" id="GO:0045003">
    <property type="term" value="P:double-strand break repair via synthesis-dependent strand annealing"/>
    <property type="evidence" value="ECO:0000314"/>
    <property type="project" value="TAIR"/>
</dbReference>
<dbReference type="GO" id="GO:1990426">
    <property type="term" value="P:mitotic recombination-dependent replication fork processing"/>
    <property type="evidence" value="ECO:0007669"/>
    <property type="project" value="InterPro"/>
</dbReference>
<dbReference type="GO" id="GO:0006355">
    <property type="term" value="P:regulation of DNA-templated transcription"/>
    <property type="evidence" value="ECO:0000314"/>
    <property type="project" value="TAIR"/>
</dbReference>
<dbReference type="GO" id="GO:0010332">
    <property type="term" value="P:response to gamma radiation"/>
    <property type="evidence" value="ECO:0000270"/>
    <property type="project" value="TAIR"/>
</dbReference>
<dbReference type="GO" id="GO:0009314">
    <property type="term" value="P:response to radiation"/>
    <property type="evidence" value="ECO:0000303"/>
    <property type="project" value="TAIR"/>
</dbReference>
<dbReference type="CDD" id="cd19513">
    <property type="entry name" value="Rad51"/>
    <property type="match status" value="1"/>
</dbReference>
<dbReference type="FunFam" id="1.10.150.20:FF:000008">
    <property type="entry name" value="DNA repair protein RAD51 homolog"/>
    <property type="match status" value="1"/>
</dbReference>
<dbReference type="FunFam" id="3.40.50.300:FF:000092">
    <property type="entry name" value="DNA repair protein Rad51 homolog"/>
    <property type="match status" value="1"/>
</dbReference>
<dbReference type="Gene3D" id="1.10.150.20">
    <property type="entry name" value="5' to 3' exonuclease, C-terminal subdomain"/>
    <property type="match status" value="1"/>
</dbReference>
<dbReference type="Gene3D" id="3.40.50.300">
    <property type="entry name" value="P-loop containing nucleotide triphosphate hydrolases"/>
    <property type="match status" value="1"/>
</dbReference>
<dbReference type="InterPro" id="IPR003593">
    <property type="entry name" value="AAA+_ATPase"/>
</dbReference>
<dbReference type="InterPro" id="IPR011941">
    <property type="entry name" value="DNA_recomb/repair_Rad51"/>
</dbReference>
<dbReference type="InterPro" id="IPR013632">
    <property type="entry name" value="DNA_recomb/repair_Rad51_C"/>
</dbReference>
<dbReference type="InterPro" id="IPR016467">
    <property type="entry name" value="DNA_recomb/repair_RecA-like"/>
</dbReference>
<dbReference type="InterPro" id="IPR010995">
    <property type="entry name" value="DNA_repair_Rad51/TF_NusA_a-hlx"/>
</dbReference>
<dbReference type="InterPro" id="IPR027417">
    <property type="entry name" value="P-loop_NTPase"/>
</dbReference>
<dbReference type="InterPro" id="IPR020588">
    <property type="entry name" value="RecA_ATP-bd"/>
</dbReference>
<dbReference type="InterPro" id="IPR020587">
    <property type="entry name" value="RecA_monomer-monomer_interface"/>
</dbReference>
<dbReference type="NCBIfam" id="NF003301">
    <property type="entry name" value="PRK04301.1"/>
    <property type="match status" value="1"/>
</dbReference>
<dbReference type="NCBIfam" id="TIGR02239">
    <property type="entry name" value="recomb_RAD51"/>
    <property type="match status" value="1"/>
</dbReference>
<dbReference type="PANTHER" id="PTHR22942:SF39">
    <property type="entry name" value="DNA REPAIR PROTEIN RAD51 HOMOLOG 1"/>
    <property type="match status" value="1"/>
</dbReference>
<dbReference type="PANTHER" id="PTHR22942">
    <property type="entry name" value="RECA/RAD51/RADA DNA STRAND-PAIRING FAMILY MEMBER"/>
    <property type="match status" value="1"/>
</dbReference>
<dbReference type="Pfam" id="PF14520">
    <property type="entry name" value="HHH_5"/>
    <property type="match status" value="1"/>
</dbReference>
<dbReference type="Pfam" id="PF08423">
    <property type="entry name" value="Rad51"/>
    <property type="match status" value="1"/>
</dbReference>
<dbReference type="PIRSF" id="PIRSF005856">
    <property type="entry name" value="Rad51"/>
    <property type="match status" value="1"/>
</dbReference>
<dbReference type="SMART" id="SM00382">
    <property type="entry name" value="AAA"/>
    <property type="match status" value="1"/>
</dbReference>
<dbReference type="SUPFAM" id="SSF52540">
    <property type="entry name" value="P-loop containing nucleoside triphosphate hydrolases"/>
    <property type="match status" value="1"/>
</dbReference>
<dbReference type="SUPFAM" id="SSF47794">
    <property type="entry name" value="Rad51 N-terminal domain-like"/>
    <property type="match status" value="1"/>
</dbReference>
<dbReference type="PROSITE" id="PS50162">
    <property type="entry name" value="RECA_2"/>
    <property type="match status" value="1"/>
</dbReference>
<dbReference type="PROSITE" id="PS50163">
    <property type="entry name" value="RECA_3"/>
    <property type="match status" value="1"/>
</dbReference>
<sequence>MTTMEQRRNQNAVQQQDDEETQHGPFPVEQLQAAGIASVDVKKLRDAGLCTVEGVAYTPRKDLLQIKGISDAKVDKIVEAASKLVPLGFTSASQLHAQRQEIIQITSGSRELDKVLEGGIETGSITELYGEFRSGKTQLCHTLCVTCQLPMDQGGGEGKAMYIDAEGTFRPQRLLQIADRFGLNGADVLENVAYARAYNTDHQSRLLLEAASMMIETRFALLIVDSATALYRTDFSGRGELSARQMHLAKFLRSLQKLADEFGVAVVITNQVVAQVDGSALFAGPQFKPIGGNIMAHATTTRLALRKGRAEERICKVISSPCLPEAEARFQISTEGVTDCKD</sequence>
<feature type="chain" id="PRO_0000122926" description="DNA repair protein RAD51 homolog 1">
    <location>
        <begin position="1"/>
        <end position="342"/>
    </location>
</feature>
<feature type="domain" description="HhH">
    <location>
        <begin position="51"/>
        <end position="80"/>
    </location>
</feature>
<feature type="domain" description="FtsK" evidence="2">
    <location>
        <begin position="100"/>
        <end position="314"/>
    </location>
</feature>
<feature type="region of interest" description="Disordered" evidence="3">
    <location>
        <begin position="1"/>
        <end position="24"/>
    </location>
</feature>
<feature type="binding site" evidence="2">
    <location>
        <begin position="130"/>
        <end position="137"/>
    </location>
    <ligand>
        <name>ATP</name>
        <dbReference type="ChEBI" id="CHEBI:30616"/>
    </ligand>
</feature>
<gene>
    <name evidence="11" type="primary">RAD51</name>
    <name evidence="13" type="ordered locus">At5g20850</name>
    <name evidence="14" type="ORF">F22D1.20</name>
</gene>
<reference key="1">
    <citation type="journal article" date="1996" name="Plant Mol. Biol.">
        <title>Nucleotide sequences of nuclear tRNA(Cys) genes from Nicotiana and Arabidopsis and expression in HeLa cell extract.</title>
        <authorList>
            <person name="Urban C."/>
            <person name="Smith K.N."/>
            <person name="Beier H."/>
        </authorList>
    </citation>
    <scope>NUCLEOTIDE SEQUENCE [GENOMIC DNA]</scope>
    <source>
        <strain>cv. Landsberg erecta</strain>
    </source>
</reference>
<reference key="2">
    <citation type="journal article" date="1998" name="Mol. Gen. Genet.">
        <title>Isolation and characterisation of the RAD51 and DMC1 homologs from Arabidopsis thaliana.</title>
        <authorList>
            <person name="Doutriaux M.P."/>
            <person name="Couteau F."/>
            <person name="Bergounioux C."/>
            <person name="White C."/>
        </authorList>
    </citation>
    <scope>NUCLEOTIDE SEQUENCE [GENOMIC DNA]</scope>
    <scope>INDUCTION</scope>
    <scope>DEVELOPMENTAL STAGE</scope>
    <scope>TISSUE SPECIFICITY</scope>
    <source>
        <strain>cv. Columbia</strain>
    </source>
</reference>
<reference key="3">
    <citation type="journal article" date="2000" name="Nature">
        <title>Sequence and analysis of chromosome 5 of the plant Arabidopsis thaliana.</title>
        <authorList>
            <person name="Tabata S."/>
            <person name="Kaneko T."/>
            <person name="Nakamura Y."/>
            <person name="Kotani H."/>
            <person name="Kato T."/>
            <person name="Asamizu E."/>
            <person name="Miyajima N."/>
            <person name="Sasamoto S."/>
            <person name="Kimura T."/>
            <person name="Hosouchi T."/>
            <person name="Kawashima K."/>
            <person name="Kohara M."/>
            <person name="Matsumoto M."/>
            <person name="Matsuno A."/>
            <person name="Muraki A."/>
            <person name="Nakayama S."/>
            <person name="Nakazaki N."/>
            <person name="Naruo K."/>
            <person name="Okumura S."/>
            <person name="Shinpo S."/>
            <person name="Takeuchi C."/>
            <person name="Wada T."/>
            <person name="Watanabe A."/>
            <person name="Yamada M."/>
            <person name="Yasuda M."/>
            <person name="Sato S."/>
            <person name="de la Bastide M."/>
            <person name="Huang E."/>
            <person name="Spiegel L."/>
            <person name="Gnoj L."/>
            <person name="O'Shaughnessy A."/>
            <person name="Preston R."/>
            <person name="Habermann K."/>
            <person name="Murray J."/>
            <person name="Johnson D."/>
            <person name="Rohlfing T."/>
            <person name="Nelson J."/>
            <person name="Stoneking T."/>
            <person name="Pepin K."/>
            <person name="Spieth J."/>
            <person name="Sekhon M."/>
            <person name="Armstrong J."/>
            <person name="Becker M."/>
            <person name="Belter E."/>
            <person name="Cordum H."/>
            <person name="Cordes M."/>
            <person name="Courtney L."/>
            <person name="Courtney W."/>
            <person name="Dante M."/>
            <person name="Du H."/>
            <person name="Edwards J."/>
            <person name="Fryman J."/>
            <person name="Haakensen B."/>
            <person name="Lamar E."/>
            <person name="Latreille P."/>
            <person name="Leonard S."/>
            <person name="Meyer R."/>
            <person name="Mulvaney E."/>
            <person name="Ozersky P."/>
            <person name="Riley A."/>
            <person name="Strowmatt C."/>
            <person name="Wagner-McPherson C."/>
            <person name="Wollam A."/>
            <person name="Yoakum M."/>
            <person name="Bell M."/>
            <person name="Dedhia N."/>
            <person name="Parnell L."/>
            <person name="Shah R."/>
            <person name="Rodriguez M."/>
            <person name="Hoon See L."/>
            <person name="Vil D."/>
            <person name="Baker J."/>
            <person name="Kirchoff K."/>
            <person name="Toth K."/>
            <person name="King L."/>
            <person name="Bahret A."/>
            <person name="Miller B."/>
            <person name="Marra M.A."/>
            <person name="Martienssen R."/>
            <person name="McCombie W.R."/>
            <person name="Wilson R.K."/>
            <person name="Murphy G."/>
            <person name="Bancroft I."/>
            <person name="Volckaert G."/>
            <person name="Wambutt R."/>
            <person name="Duesterhoeft A."/>
            <person name="Stiekema W."/>
            <person name="Pohl T."/>
            <person name="Entian K.-D."/>
            <person name="Terryn N."/>
            <person name="Hartley N."/>
            <person name="Bent E."/>
            <person name="Johnson S."/>
            <person name="Langham S.-A."/>
            <person name="McCullagh B."/>
            <person name="Robben J."/>
            <person name="Grymonprez B."/>
            <person name="Zimmermann W."/>
            <person name="Ramsperger U."/>
            <person name="Wedler H."/>
            <person name="Balke K."/>
            <person name="Wedler E."/>
            <person name="Peters S."/>
            <person name="van Staveren M."/>
            <person name="Dirkse W."/>
            <person name="Mooijman P."/>
            <person name="Klein Lankhorst R."/>
            <person name="Weitzenegger T."/>
            <person name="Bothe G."/>
            <person name="Rose M."/>
            <person name="Hauf J."/>
            <person name="Berneiser S."/>
            <person name="Hempel S."/>
            <person name="Feldpausch M."/>
            <person name="Lamberth S."/>
            <person name="Villarroel R."/>
            <person name="Gielen J."/>
            <person name="Ardiles W."/>
            <person name="Bents O."/>
            <person name="Lemcke K."/>
            <person name="Kolesov G."/>
            <person name="Mayer K.F.X."/>
            <person name="Rudd S."/>
            <person name="Schoof H."/>
            <person name="Schueller C."/>
            <person name="Zaccaria P."/>
            <person name="Mewes H.-W."/>
            <person name="Bevan M."/>
            <person name="Fransz P.F."/>
        </authorList>
    </citation>
    <scope>NUCLEOTIDE SEQUENCE [LARGE SCALE GENOMIC DNA]</scope>
    <source>
        <strain>cv. Columbia</strain>
    </source>
</reference>
<reference key="4">
    <citation type="journal article" date="2017" name="Plant J.">
        <title>Araport11: a complete reannotation of the Arabidopsis thaliana reference genome.</title>
        <authorList>
            <person name="Cheng C.Y."/>
            <person name="Krishnakumar V."/>
            <person name="Chan A.P."/>
            <person name="Thibaud-Nissen F."/>
            <person name="Schobel S."/>
            <person name="Town C.D."/>
        </authorList>
    </citation>
    <scope>GENOME REANNOTATION</scope>
    <source>
        <strain>cv. Columbia</strain>
    </source>
</reference>
<reference key="5">
    <citation type="journal article" date="2000" name="Nature">
        <title>Elevated UV-B radiation reduces genome stability in plants.</title>
        <authorList>
            <person name="Ries G."/>
            <person name="Heller W."/>
            <person name="Puchta H."/>
            <person name="Sandermann H."/>
            <person name="Seidlitz H.K."/>
            <person name="Hohn B."/>
        </authorList>
    </citation>
    <scope>INDUCTION</scope>
</reference>
<reference key="6">
    <citation type="journal article" date="2002" name="Plant Mol. Biol.">
        <title>Molecular cloning and characterization of RAD51-like genes from Arabidopsis thaliana.</title>
        <authorList>
            <person name="Osakabe K."/>
            <person name="Yoshioka T."/>
            <person name="Ichikawa H."/>
            <person name="Toki S."/>
        </authorList>
    </citation>
    <scope>INDUCTION</scope>
    <scope>SUBUNIT</scope>
    <scope>TISSUE SPECIFICITY</scope>
    <scope>INTERACTION WITH XRCC3</scope>
    <source>
        <strain>cv. Columbia</strain>
        <tissue>Flower bud</tissue>
    </source>
</reference>
<reference key="7">
    <citation type="journal article" date="2003" name="Plant Cell">
        <title>AtATM is essential for meiosis and the somatic response to DNA damage in plants.</title>
        <authorList>
            <person name="Garcia V."/>
            <person name="Bruchet H."/>
            <person name="Camescasse D."/>
            <person name="Granier F."/>
            <person name="Bouchez D."/>
            <person name="Tissier A."/>
        </authorList>
    </citation>
    <scope>INDUCTION</scope>
</reference>
<reference key="8">
    <citation type="journal article" date="2004" name="Proc. Natl. Acad. Sci. U.S.A.">
        <title>The Arabidopsis AtRAD51 gene is dispensable for vegetative development but required for meiosis.</title>
        <authorList>
            <person name="Li W."/>
            <person name="Chen C."/>
            <person name="Markmann-Mulisch U."/>
            <person name="Timofejeva L."/>
            <person name="Schmelzer E."/>
            <person name="Ma H."/>
            <person name="Reiss B."/>
        </authorList>
    </citation>
    <scope>FUNCTION</scope>
    <scope>TISSUE SPECIFICITY</scope>
</reference>
<reference key="9">
    <citation type="journal article" date="2006" name="Plant J.">
        <title>Isolation and characterization of the RAD54 gene from Arabidopsis thaliana.</title>
        <authorList>
            <person name="Osakabe K."/>
            <person name="Abe K."/>
            <person name="Yoshioka T."/>
            <person name="Osakabe Y."/>
            <person name="Todoriki S."/>
            <person name="Ichikawa H."/>
            <person name="Hohn B."/>
            <person name="Toki S."/>
        </authorList>
    </citation>
    <scope>INTERACTION WITH RAD54/CHR25</scope>
    <scope>TISSUE SPECIFICITY</scope>
    <source>
        <strain>cv. Columbia</strain>
        <tissue>Flower bud</tissue>
    </source>
</reference>
<reference key="10">
    <citation type="journal article" date="2006" name="Plant Physiol.">
        <title>Interaction between Arabidopsis Brca2 and its partners Rad51, Dmc1, and Dss1.</title>
        <authorList>
            <person name="Dray E."/>
            <person name="Siaud N."/>
            <person name="Dubois E."/>
            <person name="Doutriaux M.P."/>
        </authorList>
    </citation>
    <scope>INTERACTION WITH BRCA2A AND BRCA2B</scope>
</reference>
<protein>
    <recommendedName>
        <fullName evidence="11">DNA repair protein RAD51 homolog 1</fullName>
    </recommendedName>
    <alternativeName>
        <fullName evidence="11">Rad51-like protein 1</fullName>
        <shortName evidence="11">AtRAD51</shortName>
    </alternativeName>
</protein>